<feature type="chain" id="PRO_0000285535" description="E3 ubiquitin-protein ligase RING1">
    <location>
        <begin position="1"/>
        <end position="377"/>
    </location>
</feature>
<feature type="zinc finger region" description="RING-type" evidence="4">
    <location>
        <begin position="19"/>
        <end position="59"/>
    </location>
</feature>
<feature type="region of interest" description="Necessary for transcriptional repression" evidence="1">
    <location>
        <begin position="1"/>
        <end position="205"/>
    </location>
</feature>
<feature type="region of interest" description="Disordered" evidence="5">
    <location>
        <begin position="119"/>
        <end position="234"/>
    </location>
</feature>
<feature type="region of interest" description="Necessary for interaction with CBX2" evidence="1">
    <location>
        <begin position="201"/>
        <end position="377"/>
    </location>
</feature>
<feature type="region of interest" description="Disordered" evidence="5">
    <location>
        <begin position="280"/>
        <end position="325"/>
    </location>
</feature>
<feature type="short sequence motif" description="Nuclear localization signal" evidence="3">
    <location>
        <begin position="172"/>
        <end position="175"/>
    </location>
</feature>
<feature type="compositionally biased region" description="Acidic residues" evidence="5">
    <location>
        <begin position="146"/>
        <end position="158"/>
    </location>
</feature>
<feature type="compositionally biased region" description="Gly residues" evidence="5">
    <location>
        <begin position="176"/>
        <end position="199"/>
    </location>
</feature>
<feature type="compositionally biased region" description="Gly residues" evidence="5">
    <location>
        <begin position="206"/>
        <end position="215"/>
    </location>
</feature>
<feature type="compositionally biased region" description="Pro residues" evidence="5">
    <location>
        <begin position="217"/>
        <end position="229"/>
    </location>
</feature>
<feature type="compositionally biased region" description="Gly residues" evidence="5">
    <location>
        <begin position="286"/>
        <end position="314"/>
    </location>
</feature>
<feature type="modified residue" description="Phosphoserine" evidence="2">
    <location>
        <position position="9"/>
    </location>
</feature>
<feature type="modified residue" description="Phosphoserine" evidence="2">
    <location>
        <position position="111"/>
    </location>
</feature>
<feature type="modified residue" description="Phosphoserine" evidence="2">
    <location>
        <position position="158"/>
    </location>
</feature>
<feature type="modified residue" description="Phosphoserine" evidence="2">
    <location>
        <position position="161"/>
    </location>
</feature>
<feature type="modified residue" description="Phosphothreonine" evidence="2">
    <location>
        <position position="186"/>
    </location>
</feature>
<feature type="modified residue" description="Phosphothreonine" evidence="2">
    <location>
        <position position="191"/>
    </location>
</feature>
<feature type="modified residue" description="Phosphoserine" evidence="2">
    <location>
        <position position="200"/>
    </location>
</feature>
<feature type="modified residue" description="Phosphoserine" evidence="2">
    <location>
        <position position="203"/>
    </location>
</feature>
<feature type="modified residue" description="Phosphoserine" evidence="2">
    <location>
        <position position="219"/>
    </location>
</feature>
<feature type="modified residue" description="Phosphoserine" evidence="2">
    <location>
        <position position="225"/>
    </location>
</feature>
<sequence>MDGTEIAVSPRSLHSELMCPICLDMLKNTMTTKECLHRFCSDCIVTALRSGNKECPTCRKKLVSKRSLRPDPNFDALISKIYPSREEYEAHQDRVLIRLSRLHNQQALSSSIEEGLRMQAMHRAQRVRRPIPGSDQTTTMSGGEGDPGEGEGDGEDVSSDSAPDSAPGPAPKRPRGGGAGGSSVGTGGGGTGGVGGGAGSEDSGDRGGTLGGGTLGPPSPPGAPSPPEPGGEIELVFRPHPLLVEKGEYCQTRYVKTTGNATVDHLSKYLALRIALERRQQQEAGEPGGPGGGASDTGGPDGGGGEGGGAGGGDGPEEPALPSLEGVSEKQYTIYIAPGGGAFTTLNGSLTLELVNEKFWKVSRPLELCYAPTKDPK</sequence>
<organism>
    <name type="scientific">Gorilla gorilla gorilla</name>
    <name type="common">Western lowland gorilla</name>
    <dbReference type="NCBI Taxonomy" id="9595"/>
    <lineage>
        <taxon>Eukaryota</taxon>
        <taxon>Metazoa</taxon>
        <taxon>Chordata</taxon>
        <taxon>Craniata</taxon>
        <taxon>Vertebrata</taxon>
        <taxon>Euteleostomi</taxon>
        <taxon>Mammalia</taxon>
        <taxon>Eutheria</taxon>
        <taxon>Euarchontoglires</taxon>
        <taxon>Primates</taxon>
        <taxon>Haplorrhini</taxon>
        <taxon>Catarrhini</taxon>
        <taxon>Hominidae</taxon>
        <taxon>Gorilla</taxon>
    </lineage>
</organism>
<comment type="function">
    <text evidence="1">Constitutes one of the E3 ubiquitin-protein ligases that mediate monoubiquitination of 'Lys-119' of histone H2A, thereby playing a central role in histone code and gene regulation. H2A 'Lys-119' ubiquitination gives a specific tag for epigenetic transcriptional repression and participates in X chromosome inactivation of female mammals. Essential component of a Polycomb group (PcG) multiprotein PRC1-like complex, a complex class required to maintain the transcriptionally repressive state of many genes, including Hox genes, throughout development. PcG PRC1 complex acts via chromatin remodeling and modification of histones, rendering chromatin heritably changed in its expressibility. Compared to RNF2/RING2, it does not have the main E3 ubiquitin ligase activity on histone H2A, and it may rather act as a modulator of RNF2/RING2 activity (By similarity).</text>
</comment>
<comment type="catalytic activity">
    <reaction>
        <text>S-ubiquitinyl-[E2 ubiquitin-conjugating enzyme]-L-cysteine + [acceptor protein]-L-lysine = [E2 ubiquitin-conjugating enzyme]-L-cysteine + N(6)-ubiquitinyl-[acceptor protein]-L-lysine.</text>
        <dbReference type="EC" id="2.3.2.27"/>
    </reaction>
</comment>
<comment type="pathway">
    <text>Protein modification; protein ubiquitination.</text>
</comment>
<comment type="subunit">
    <text evidence="1 2">Component of chromatin-associated Polycomb (PcG) complexes. Part of the E2F6.com-1 complex in G0 phase composed of E2F6, MGA, MAX, TFDP1, CBX3, BAT8, EUHMTASE1, RING1, RNF2/RING2 MBLR, L3MBTL2 and YAF2. Interacts with CBX2 and PCGF6. Component of a PRC1-like complex. Component of repressive BCOR complex containing Polycomb group subcomplex at least composed of RYBP, PCGF1, BCOR and RNF2/RING2. Interacts with BMI1, PHC2, PCGF2, RNF2; CBX6, CBX7 and CBX8 (By similarity). Interacts with MN1 (By similarity).</text>
</comment>
<comment type="subcellular location">
    <subcellularLocation>
        <location evidence="1">Nucleus speckle</location>
    </subcellularLocation>
</comment>
<reference key="1">
    <citation type="submission" date="2006-08" db="EMBL/GenBank/DDBJ databases">
        <title>Positive selection in transcription factor genes on the human lineage.</title>
        <authorList>
            <person name="Nickel G.C."/>
            <person name="Tefft D.L."/>
            <person name="Trevarthen K."/>
            <person name="Funt J."/>
            <person name="Adams M.D."/>
        </authorList>
    </citation>
    <scope>NUCLEOTIDE SEQUENCE [GENOMIC DNA]</scope>
</reference>
<protein>
    <recommendedName>
        <fullName>E3 ubiquitin-protein ligase RING1</fullName>
        <ecNumber>2.3.2.27</ecNumber>
    </recommendedName>
    <alternativeName>
        <fullName>Polycomb complex protein RING1</fullName>
    </alternativeName>
    <alternativeName>
        <fullName>RING finger protein 1</fullName>
    </alternativeName>
    <alternativeName>
        <fullName evidence="6">RING-type E3 ubiquitin transferase RING1</fullName>
    </alternativeName>
</protein>
<proteinExistence type="inferred from homology"/>
<keyword id="KW-0156">Chromatin regulator</keyword>
<keyword id="KW-0479">Metal-binding</keyword>
<keyword id="KW-0539">Nucleus</keyword>
<keyword id="KW-0597">Phosphoprotein</keyword>
<keyword id="KW-1185">Reference proteome</keyword>
<keyword id="KW-0678">Repressor</keyword>
<keyword id="KW-0804">Transcription</keyword>
<keyword id="KW-0805">Transcription regulation</keyword>
<keyword id="KW-0808">Transferase</keyword>
<keyword id="KW-0833">Ubl conjugation pathway</keyword>
<keyword id="KW-0862">Zinc</keyword>
<keyword id="KW-0863">Zinc-finger</keyword>
<name>RING1_GORGO</name>
<dbReference type="EC" id="2.3.2.27"/>
<dbReference type="EMBL" id="DQ976446">
    <property type="protein sequence ID" value="ABM46633.1"/>
    <property type="molecule type" value="Genomic_DNA"/>
</dbReference>
<dbReference type="SMR" id="A1YER5"/>
<dbReference type="STRING" id="9593.ENSGGOP00000009618"/>
<dbReference type="eggNOG" id="KOG0311">
    <property type="taxonomic scope" value="Eukaryota"/>
</dbReference>
<dbReference type="InParanoid" id="A1YER5"/>
<dbReference type="UniPathway" id="UPA00143"/>
<dbReference type="Proteomes" id="UP000001519">
    <property type="component" value="Unplaced"/>
</dbReference>
<dbReference type="GO" id="GO:0016607">
    <property type="term" value="C:nuclear speck"/>
    <property type="evidence" value="ECO:0007669"/>
    <property type="project" value="UniProtKB-SubCell"/>
</dbReference>
<dbReference type="GO" id="GO:0031519">
    <property type="term" value="C:PcG protein complex"/>
    <property type="evidence" value="ECO:0000250"/>
    <property type="project" value="UniProtKB"/>
</dbReference>
<dbReference type="GO" id="GO:0035102">
    <property type="term" value="C:PRC1 complex"/>
    <property type="evidence" value="ECO:0000250"/>
    <property type="project" value="UniProtKB"/>
</dbReference>
<dbReference type="GO" id="GO:0000151">
    <property type="term" value="C:ubiquitin ligase complex"/>
    <property type="evidence" value="ECO:0000318"/>
    <property type="project" value="GO_Central"/>
</dbReference>
<dbReference type="GO" id="GO:0003682">
    <property type="term" value="F:chromatin binding"/>
    <property type="evidence" value="ECO:0000318"/>
    <property type="project" value="GO_Central"/>
</dbReference>
<dbReference type="GO" id="GO:0061630">
    <property type="term" value="F:ubiquitin protein ligase activity"/>
    <property type="evidence" value="ECO:0000318"/>
    <property type="project" value="GO_Central"/>
</dbReference>
<dbReference type="GO" id="GO:0008270">
    <property type="term" value="F:zinc ion binding"/>
    <property type="evidence" value="ECO:0007669"/>
    <property type="project" value="UniProtKB-KW"/>
</dbReference>
<dbReference type="GO" id="GO:0006325">
    <property type="term" value="P:chromatin organization"/>
    <property type="evidence" value="ECO:0007669"/>
    <property type="project" value="UniProtKB-KW"/>
</dbReference>
<dbReference type="GO" id="GO:0045892">
    <property type="term" value="P:negative regulation of DNA-templated transcription"/>
    <property type="evidence" value="ECO:0000318"/>
    <property type="project" value="GO_Central"/>
</dbReference>
<dbReference type="GO" id="GO:0016567">
    <property type="term" value="P:protein ubiquitination"/>
    <property type="evidence" value="ECO:0007669"/>
    <property type="project" value="UniProtKB-UniPathway"/>
</dbReference>
<dbReference type="CDD" id="cd17166">
    <property type="entry name" value="RAWUL_RING1"/>
    <property type="match status" value="1"/>
</dbReference>
<dbReference type="CDD" id="cd16740">
    <property type="entry name" value="RING-HC_RING2"/>
    <property type="match status" value="1"/>
</dbReference>
<dbReference type="FunFam" id="3.30.40.10:FF:000100">
    <property type="entry name" value="E3 ubiquitin-protein ligase RING2"/>
    <property type="match status" value="1"/>
</dbReference>
<dbReference type="Gene3D" id="3.10.20.90">
    <property type="entry name" value="Phosphatidylinositol 3-kinase Catalytic Subunit, Chain A, domain 1"/>
    <property type="match status" value="1"/>
</dbReference>
<dbReference type="Gene3D" id="3.30.40.10">
    <property type="entry name" value="Zinc/RING finger domain, C3HC4 (zinc finger)"/>
    <property type="match status" value="1"/>
</dbReference>
<dbReference type="InterPro" id="IPR032443">
    <property type="entry name" value="RAWUL"/>
</dbReference>
<dbReference type="InterPro" id="IPR043540">
    <property type="entry name" value="RING1/RING2"/>
</dbReference>
<dbReference type="InterPro" id="IPR001841">
    <property type="entry name" value="Znf_RING"/>
</dbReference>
<dbReference type="InterPro" id="IPR013083">
    <property type="entry name" value="Znf_RING/FYVE/PHD"/>
</dbReference>
<dbReference type="InterPro" id="IPR017907">
    <property type="entry name" value="Znf_RING_CS"/>
</dbReference>
<dbReference type="PANTHER" id="PTHR46076:SF2">
    <property type="entry name" value="E3 UBIQUITIN-PROTEIN LIGASE RING1"/>
    <property type="match status" value="1"/>
</dbReference>
<dbReference type="PANTHER" id="PTHR46076">
    <property type="entry name" value="E3 UBIQUITIN-PROTEIN LIGASE RING1 / RING 2 FAMILY MEMBER"/>
    <property type="match status" value="1"/>
</dbReference>
<dbReference type="Pfam" id="PF16207">
    <property type="entry name" value="RAWUL"/>
    <property type="match status" value="1"/>
</dbReference>
<dbReference type="Pfam" id="PF13923">
    <property type="entry name" value="zf-C3HC4_2"/>
    <property type="match status" value="1"/>
</dbReference>
<dbReference type="SMART" id="SM00184">
    <property type="entry name" value="RING"/>
    <property type="match status" value="1"/>
</dbReference>
<dbReference type="SUPFAM" id="SSF57850">
    <property type="entry name" value="RING/U-box"/>
    <property type="match status" value="1"/>
</dbReference>
<dbReference type="PROSITE" id="PS00518">
    <property type="entry name" value="ZF_RING_1"/>
    <property type="match status" value="1"/>
</dbReference>
<dbReference type="PROSITE" id="PS50089">
    <property type="entry name" value="ZF_RING_2"/>
    <property type="match status" value="1"/>
</dbReference>
<accession>A1YER5</accession>
<evidence type="ECO:0000250" key="1"/>
<evidence type="ECO:0000250" key="2">
    <source>
        <dbReference type="UniProtKB" id="Q06587"/>
    </source>
</evidence>
<evidence type="ECO:0000255" key="3"/>
<evidence type="ECO:0000255" key="4">
    <source>
        <dbReference type="PROSITE-ProRule" id="PRU00175"/>
    </source>
</evidence>
<evidence type="ECO:0000256" key="5">
    <source>
        <dbReference type="SAM" id="MobiDB-lite"/>
    </source>
</evidence>
<evidence type="ECO:0000305" key="6"/>
<gene>
    <name type="primary">RING1</name>
</gene>